<organism>
    <name type="scientific">Burkholderia mallei (strain ATCC 23344)</name>
    <dbReference type="NCBI Taxonomy" id="243160"/>
    <lineage>
        <taxon>Bacteria</taxon>
        <taxon>Pseudomonadati</taxon>
        <taxon>Pseudomonadota</taxon>
        <taxon>Betaproteobacteria</taxon>
        <taxon>Burkholderiales</taxon>
        <taxon>Burkholderiaceae</taxon>
        <taxon>Burkholderia</taxon>
        <taxon>pseudomallei group</taxon>
    </lineage>
</organism>
<reference key="1">
    <citation type="journal article" date="2004" name="Proc. Natl. Acad. Sci. U.S.A.">
        <title>Structural flexibility in the Burkholderia mallei genome.</title>
        <authorList>
            <person name="Nierman W.C."/>
            <person name="DeShazer D."/>
            <person name="Kim H.S."/>
            <person name="Tettelin H."/>
            <person name="Nelson K.E."/>
            <person name="Feldblyum T.V."/>
            <person name="Ulrich R.L."/>
            <person name="Ronning C.M."/>
            <person name="Brinkac L.M."/>
            <person name="Daugherty S.C."/>
            <person name="Davidsen T.D."/>
            <person name="DeBoy R.T."/>
            <person name="Dimitrov G."/>
            <person name="Dodson R.J."/>
            <person name="Durkin A.S."/>
            <person name="Gwinn M.L."/>
            <person name="Haft D.H."/>
            <person name="Khouri H.M."/>
            <person name="Kolonay J.F."/>
            <person name="Madupu R."/>
            <person name="Mohammoud Y."/>
            <person name="Nelson W.C."/>
            <person name="Radune D."/>
            <person name="Romero C.M."/>
            <person name="Sarria S."/>
            <person name="Selengut J."/>
            <person name="Shamblin C."/>
            <person name="Sullivan S.A."/>
            <person name="White O."/>
            <person name="Yu Y."/>
            <person name="Zafar N."/>
            <person name="Zhou L."/>
            <person name="Fraser C.M."/>
        </authorList>
    </citation>
    <scope>NUCLEOTIDE SEQUENCE [LARGE SCALE GENOMIC DNA]</scope>
    <source>
        <strain>ATCC 23344</strain>
    </source>
</reference>
<keyword id="KW-0067">ATP-binding</keyword>
<keyword id="KW-0963">Cytoplasm</keyword>
<keyword id="KW-0436">Ligase</keyword>
<keyword id="KW-0547">Nucleotide-binding</keyword>
<keyword id="KW-1185">Reference proteome</keyword>
<keyword id="KW-0819">tRNA processing</keyword>
<sequence length="489" mass="53200">MIPPHEFSAERVVFDALGVALSALPDDTPIAIAYSGGLDSTVLLHAAARIAGAGRCIALHVHHGLSANADAWLAHCAETAQALGARFDAARVDVPRASGQGIEASARDARYRALETMCARYGARTLWLAQHADDQAETVLLQLLRGAGIAGLAAMAPQYRPALADVVRMRPLLHLLRAQLERYAQQHALRWIDDESNTDTRYARNALRVDVLPALAPHFPGFRDALARTAQHAAAAQRLLDDLAAIDLRAVARADVRVLSRDAFVALDDERGANLLRYWMRSLGLPGASAARLAEMVKQLRAARDAHALRVDHAGWRLRLYRDDVQWEAGDGAASEAARADVADDDAADARDDRADASAAARLPACALAWRGHEVWRLPGWRGSFVFSPVAAHEHDAVPEALLSSAALRACARAGGERMRTWQGGPGRTLKNLFQERGVPAWQRDVPLLYVGERLLFVPRIGVNRATHDGADAPGGWRRIEWRPDMLIA</sequence>
<feature type="chain" id="PRO_0000181667" description="tRNA(Ile)-lysidine synthase">
    <location>
        <begin position="1"/>
        <end position="489"/>
    </location>
</feature>
<feature type="binding site" evidence="1">
    <location>
        <begin position="35"/>
        <end position="40"/>
    </location>
    <ligand>
        <name>ATP</name>
        <dbReference type="ChEBI" id="CHEBI:30616"/>
    </ligand>
</feature>
<accession>Q62J40</accession>
<gene>
    <name evidence="1" type="primary">tilS</name>
    <name type="ordered locus">BMA1653</name>
</gene>
<comment type="function">
    <text evidence="1">Ligates lysine onto the cytidine present at position 34 of the AUA codon-specific tRNA(Ile) that contains the anticodon CAU, in an ATP-dependent manner. Cytidine is converted to lysidine, thus changing the amino acid specificity of the tRNA from methionine to isoleucine.</text>
</comment>
<comment type="catalytic activity">
    <reaction evidence="1">
        <text>cytidine(34) in tRNA(Ile2) + L-lysine + ATP = lysidine(34) in tRNA(Ile2) + AMP + diphosphate + H(+)</text>
        <dbReference type="Rhea" id="RHEA:43744"/>
        <dbReference type="Rhea" id="RHEA-COMP:10625"/>
        <dbReference type="Rhea" id="RHEA-COMP:10670"/>
        <dbReference type="ChEBI" id="CHEBI:15378"/>
        <dbReference type="ChEBI" id="CHEBI:30616"/>
        <dbReference type="ChEBI" id="CHEBI:32551"/>
        <dbReference type="ChEBI" id="CHEBI:33019"/>
        <dbReference type="ChEBI" id="CHEBI:82748"/>
        <dbReference type="ChEBI" id="CHEBI:83665"/>
        <dbReference type="ChEBI" id="CHEBI:456215"/>
        <dbReference type="EC" id="6.3.4.19"/>
    </reaction>
</comment>
<comment type="subcellular location">
    <subcellularLocation>
        <location evidence="1">Cytoplasm</location>
    </subcellularLocation>
</comment>
<comment type="domain">
    <text>The N-terminal region contains the highly conserved SGGXDS motif, predicted to be a P-loop motif involved in ATP binding.</text>
</comment>
<comment type="similarity">
    <text evidence="1">Belongs to the tRNA(Ile)-lysidine synthase family.</text>
</comment>
<dbReference type="EC" id="6.3.4.19" evidence="1"/>
<dbReference type="EMBL" id="CP000010">
    <property type="protein sequence ID" value="AAU47770.1"/>
    <property type="molecule type" value="Genomic_DNA"/>
</dbReference>
<dbReference type="RefSeq" id="WP_004191335.1">
    <property type="nucleotide sequence ID" value="NC_006348.1"/>
</dbReference>
<dbReference type="RefSeq" id="YP_103279.1">
    <property type="nucleotide sequence ID" value="NC_006348.1"/>
</dbReference>
<dbReference type="SMR" id="Q62J40"/>
<dbReference type="GeneID" id="92979375"/>
<dbReference type="KEGG" id="bma:BMA1653"/>
<dbReference type="PATRIC" id="fig|243160.12.peg.1693"/>
<dbReference type="eggNOG" id="COG0037">
    <property type="taxonomic scope" value="Bacteria"/>
</dbReference>
<dbReference type="HOGENOM" id="CLU_018869_2_0_4"/>
<dbReference type="Proteomes" id="UP000006693">
    <property type="component" value="Chromosome 1"/>
</dbReference>
<dbReference type="GO" id="GO:0005737">
    <property type="term" value="C:cytoplasm"/>
    <property type="evidence" value="ECO:0007669"/>
    <property type="project" value="UniProtKB-SubCell"/>
</dbReference>
<dbReference type="GO" id="GO:0005524">
    <property type="term" value="F:ATP binding"/>
    <property type="evidence" value="ECO:0007669"/>
    <property type="project" value="UniProtKB-UniRule"/>
</dbReference>
<dbReference type="GO" id="GO:0032267">
    <property type="term" value="F:tRNA(Ile)-lysidine synthase activity"/>
    <property type="evidence" value="ECO:0007669"/>
    <property type="project" value="UniProtKB-EC"/>
</dbReference>
<dbReference type="GO" id="GO:0006400">
    <property type="term" value="P:tRNA modification"/>
    <property type="evidence" value="ECO:0007669"/>
    <property type="project" value="UniProtKB-UniRule"/>
</dbReference>
<dbReference type="CDD" id="cd01992">
    <property type="entry name" value="TilS_N"/>
    <property type="match status" value="1"/>
</dbReference>
<dbReference type="Gene3D" id="1.20.59.20">
    <property type="match status" value="1"/>
</dbReference>
<dbReference type="Gene3D" id="3.40.50.620">
    <property type="entry name" value="HUPs"/>
    <property type="match status" value="1"/>
</dbReference>
<dbReference type="HAMAP" id="MF_01161">
    <property type="entry name" value="tRNA_Ile_lys_synt"/>
    <property type="match status" value="1"/>
</dbReference>
<dbReference type="InterPro" id="IPR012796">
    <property type="entry name" value="Lysidine-tRNA-synth_C"/>
</dbReference>
<dbReference type="InterPro" id="IPR014729">
    <property type="entry name" value="Rossmann-like_a/b/a_fold"/>
</dbReference>
<dbReference type="InterPro" id="IPR011063">
    <property type="entry name" value="TilS/TtcA_N"/>
</dbReference>
<dbReference type="InterPro" id="IPR012094">
    <property type="entry name" value="tRNA_Ile_lys_synt"/>
</dbReference>
<dbReference type="InterPro" id="IPR012795">
    <property type="entry name" value="tRNA_Ile_lys_synt_N"/>
</dbReference>
<dbReference type="InterPro" id="IPR015262">
    <property type="entry name" value="tRNA_Ile_lys_synt_subst-bd"/>
</dbReference>
<dbReference type="NCBIfam" id="TIGR02433">
    <property type="entry name" value="lysidine_TilS_C"/>
    <property type="match status" value="1"/>
</dbReference>
<dbReference type="NCBIfam" id="TIGR02432">
    <property type="entry name" value="lysidine_TilS_N"/>
    <property type="match status" value="1"/>
</dbReference>
<dbReference type="PANTHER" id="PTHR43033">
    <property type="entry name" value="TRNA(ILE)-LYSIDINE SYNTHASE-RELATED"/>
    <property type="match status" value="1"/>
</dbReference>
<dbReference type="PANTHER" id="PTHR43033:SF1">
    <property type="entry name" value="TRNA(ILE)-LYSIDINE SYNTHASE-RELATED"/>
    <property type="match status" value="1"/>
</dbReference>
<dbReference type="Pfam" id="PF01171">
    <property type="entry name" value="ATP_bind_3"/>
    <property type="match status" value="1"/>
</dbReference>
<dbReference type="Pfam" id="PF09179">
    <property type="entry name" value="TilS"/>
    <property type="match status" value="1"/>
</dbReference>
<dbReference type="Pfam" id="PF11734">
    <property type="entry name" value="TilS_C"/>
    <property type="match status" value="1"/>
</dbReference>
<dbReference type="SMART" id="SM00977">
    <property type="entry name" value="TilS_C"/>
    <property type="match status" value="1"/>
</dbReference>
<dbReference type="SUPFAM" id="SSF52402">
    <property type="entry name" value="Adenine nucleotide alpha hydrolases-like"/>
    <property type="match status" value="1"/>
</dbReference>
<dbReference type="SUPFAM" id="SSF82829">
    <property type="entry name" value="MesJ substrate recognition domain-like"/>
    <property type="match status" value="1"/>
</dbReference>
<dbReference type="SUPFAM" id="SSF56037">
    <property type="entry name" value="PheT/TilS domain"/>
    <property type="match status" value="1"/>
</dbReference>
<proteinExistence type="inferred from homology"/>
<protein>
    <recommendedName>
        <fullName evidence="1">tRNA(Ile)-lysidine synthase</fullName>
        <ecNumber evidence="1">6.3.4.19</ecNumber>
    </recommendedName>
    <alternativeName>
        <fullName evidence="1">tRNA(Ile)-2-lysyl-cytidine synthase</fullName>
    </alternativeName>
    <alternativeName>
        <fullName evidence="1">tRNA(Ile)-lysidine synthetase</fullName>
    </alternativeName>
</protein>
<name>TILS_BURMA</name>
<evidence type="ECO:0000255" key="1">
    <source>
        <dbReference type="HAMAP-Rule" id="MF_01161"/>
    </source>
</evidence>